<comment type="subcellular location">
    <subcellularLocation>
        <location evidence="1">Cell membrane</location>
        <topology evidence="1">Multi-pass membrane protein</topology>
    </subcellularLocation>
</comment>
<comment type="similarity">
    <text evidence="1">Belongs to the UPF0060 family.</text>
</comment>
<reference key="1">
    <citation type="submission" date="2006-06" db="EMBL/GenBank/DDBJ databases">
        <title>Complete sequence of chromosome of Mycobacterium sp. MCS.</title>
        <authorList>
            <consortium name="US DOE Joint Genome Institute"/>
            <person name="Copeland A."/>
            <person name="Lucas S."/>
            <person name="Lapidus A."/>
            <person name="Barry K."/>
            <person name="Detter J.C."/>
            <person name="Glavina del Rio T."/>
            <person name="Hammon N."/>
            <person name="Israni S."/>
            <person name="Dalin E."/>
            <person name="Tice H."/>
            <person name="Pitluck S."/>
            <person name="Martinez M."/>
            <person name="Schmutz J."/>
            <person name="Larimer F."/>
            <person name="Land M."/>
            <person name="Hauser L."/>
            <person name="Kyrpides N."/>
            <person name="Kim E."/>
            <person name="Miller C.D."/>
            <person name="Hughes J.E."/>
            <person name="Anderson A.J."/>
            <person name="Sims R.C."/>
            <person name="Richardson P."/>
        </authorList>
    </citation>
    <scope>NUCLEOTIDE SEQUENCE [LARGE SCALE GENOMIC DNA]</scope>
    <source>
        <strain>MCS</strain>
    </source>
</reference>
<accession>Q1B913</accession>
<feature type="chain" id="PRO_0000282235" description="UPF0060 membrane protein Mmcs_2513">
    <location>
        <begin position="1"/>
        <end position="113"/>
    </location>
</feature>
<feature type="transmembrane region" description="Helical" evidence="1">
    <location>
        <begin position="12"/>
        <end position="32"/>
    </location>
</feature>
<feature type="transmembrane region" description="Helical" evidence="1">
    <location>
        <begin position="37"/>
        <end position="57"/>
    </location>
</feature>
<feature type="transmembrane region" description="Helical" evidence="1">
    <location>
        <begin position="66"/>
        <end position="86"/>
    </location>
</feature>
<feature type="transmembrane region" description="Helical" evidence="1">
    <location>
        <begin position="92"/>
        <end position="112"/>
    </location>
</feature>
<keyword id="KW-1003">Cell membrane</keyword>
<keyword id="KW-0472">Membrane</keyword>
<keyword id="KW-0812">Transmembrane</keyword>
<keyword id="KW-1133">Transmembrane helix</keyword>
<organism>
    <name type="scientific">Mycobacterium sp. (strain MCS)</name>
    <dbReference type="NCBI Taxonomy" id="164756"/>
    <lineage>
        <taxon>Bacteria</taxon>
        <taxon>Bacillati</taxon>
        <taxon>Actinomycetota</taxon>
        <taxon>Actinomycetes</taxon>
        <taxon>Mycobacteriales</taxon>
        <taxon>Mycobacteriaceae</taxon>
        <taxon>Mycobacterium</taxon>
    </lineage>
</organism>
<evidence type="ECO:0000255" key="1">
    <source>
        <dbReference type="HAMAP-Rule" id="MF_00010"/>
    </source>
</evidence>
<sequence length="113" mass="11954">MLTGVLVLKSAALFVLAALLEIGGAWLVWQGVREHRGWIWAGAGVIALGAYGFVAAFQPDAHFGRILAAYGGVFVAGSLLWGVVVDGFRPDRWDLTGALVCLVGVGLIMYAPR</sequence>
<name>Y2513_MYCSS</name>
<proteinExistence type="inferred from homology"/>
<dbReference type="EMBL" id="CP000384">
    <property type="protein sequence ID" value="ABG08621.1"/>
    <property type="molecule type" value="Genomic_DNA"/>
</dbReference>
<dbReference type="SMR" id="Q1B913"/>
<dbReference type="KEGG" id="mmc:Mmcs_2513"/>
<dbReference type="HOGENOM" id="CLU_117653_0_1_11"/>
<dbReference type="BioCyc" id="MSP164756:G1G6O-2564-MONOMER"/>
<dbReference type="GO" id="GO:0005886">
    <property type="term" value="C:plasma membrane"/>
    <property type="evidence" value="ECO:0007669"/>
    <property type="project" value="UniProtKB-SubCell"/>
</dbReference>
<dbReference type="HAMAP" id="MF_00010">
    <property type="entry name" value="UPF0060"/>
    <property type="match status" value="1"/>
</dbReference>
<dbReference type="InterPro" id="IPR003844">
    <property type="entry name" value="UPF0060"/>
</dbReference>
<dbReference type="NCBIfam" id="NF002586">
    <property type="entry name" value="PRK02237.1"/>
    <property type="match status" value="1"/>
</dbReference>
<dbReference type="PANTHER" id="PTHR36116">
    <property type="entry name" value="UPF0060 MEMBRANE PROTEIN YNFA"/>
    <property type="match status" value="1"/>
</dbReference>
<dbReference type="PANTHER" id="PTHR36116:SF1">
    <property type="entry name" value="UPF0060 MEMBRANE PROTEIN YNFA"/>
    <property type="match status" value="1"/>
</dbReference>
<dbReference type="Pfam" id="PF02694">
    <property type="entry name" value="UPF0060"/>
    <property type="match status" value="1"/>
</dbReference>
<dbReference type="SUPFAM" id="SSF103481">
    <property type="entry name" value="Multidrug resistance efflux transporter EmrE"/>
    <property type="match status" value="1"/>
</dbReference>
<protein>
    <recommendedName>
        <fullName evidence="1">UPF0060 membrane protein Mmcs_2513</fullName>
    </recommendedName>
</protein>
<gene>
    <name type="ordered locus">Mmcs_2513</name>
</gene>